<proteinExistence type="evidence at protein level"/>
<dbReference type="EC" id="1.1.1.-" evidence="7"/>
<dbReference type="EMBL" id="U23835">
    <property type="protein sequence ID" value="AAA86387.1"/>
    <property type="molecule type" value="mRNA"/>
</dbReference>
<dbReference type="PIR" id="I46535">
    <property type="entry name" value="I46535"/>
</dbReference>
<dbReference type="RefSeq" id="NP_001076221.1">
    <property type="nucleotide sequence ID" value="NM_001082752.1"/>
</dbReference>
<dbReference type="SMR" id="P51976"/>
<dbReference type="FunCoup" id="P51976">
    <property type="interactions" value="115"/>
</dbReference>
<dbReference type="STRING" id="9986.ENSOCUP00000037332"/>
<dbReference type="PaxDb" id="9986-ENSOCUP00000010179"/>
<dbReference type="GeneID" id="100009531"/>
<dbReference type="KEGG" id="ocu:100009531"/>
<dbReference type="CTD" id="3291"/>
<dbReference type="eggNOG" id="KOG1610">
    <property type="taxonomic scope" value="Eukaryota"/>
</dbReference>
<dbReference type="InParanoid" id="P51976"/>
<dbReference type="OrthoDB" id="9876299at2759"/>
<dbReference type="BRENDA" id="1.1.1.B40">
    <property type="organism ID" value="1749"/>
</dbReference>
<dbReference type="Proteomes" id="UP000001811">
    <property type="component" value="Unplaced"/>
</dbReference>
<dbReference type="GO" id="GO:0005783">
    <property type="term" value="C:endoplasmic reticulum"/>
    <property type="evidence" value="ECO:0007669"/>
    <property type="project" value="UniProtKB-SubCell"/>
</dbReference>
<dbReference type="GO" id="GO:0070523">
    <property type="term" value="F:11-beta-hydroxysteroid dehydrogenase (NAD+) activity"/>
    <property type="evidence" value="ECO:0007669"/>
    <property type="project" value="TreeGrafter"/>
</dbReference>
<dbReference type="GO" id="GO:0008211">
    <property type="term" value="P:glucocorticoid metabolic process"/>
    <property type="evidence" value="ECO:0007669"/>
    <property type="project" value="TreeGrafter"/>
</dbReference>
<dbReference type="CDD" id="cd09805">
    <property type="entry name" value="type2_17beta_HSD-like_SDR_c"/>
    <property type="match status" value="1"/>
</dbReference>
<dbReference type="FunFam" id="3.40.50.720:FF:000074">
    <property type="entry name" value="Retinol dehydrogenase type 1"/>
    <property type="match status" value="1"/>
</dbReference>
<dbReference type="Gene3D" id="3.40.50.720">
    <property type="entry name" value="NAD(P)-binding Rossmann-like Domain"/>
    <property type="match status" value="1"/>
</dbReference>
<dbReference type="InterPro" id="IPR036291">
    <property type="entry name" value="NAD(P)-bd_dom_sf"/>
</dbReference>
<dbReference type="InterPro" id="IPR020904">
    <property type="entry name" value="Sc_DH/Rdtase_CS"/>
</dbReference>
<dbReference type="InterPro" id="IPR002347">
    <property type="entry name" value="SDR_fam"/>
</dbReference>
<dbReference type="PANTHER" id="PTHR43313:SF2">
    <property type="entry name" value="11-BETA-HYDROXYSTEROID DEHYDROGENASE TYPE 2"/>
    <property type="match status" value="1"/>
</dbReference>
<dbReference type="PANTHER" id="PTHR43313">
    <property type="entry name" value="SHORT-CHAIN DEHYDROGENASE/REDUCTASE FAMILY 9C"/>
    <property type="match status" value="1"/>
</dbReference>
<dbReference type="Pfam" id="PF00106">
    <property type="entry name" value="adh_short"/>
    <property type="match status" value="1"/>
</dbReference>
<dbReference type="PRINTS" id="PR00081">
    <property type="entry name" value="GDHRDH"/>
</dbReference>
<dbReference type="SUPFAM" id="SSF51735">
    <property type="entry name" value="NAD(P)-binding Rossmann-fold domains"/>
    <property type="match status" value="1"/>
</dbReference>
<dbReference type="PROSITE" id="PS00061">
    <property type="entry name" value="ADH_SHORT"/>
    <property type="match status" value="1"/>
</dbReference>
<sequence>MERWPWPSGGAWLLVAARALIQLLRADLRLGRPLLAALALLAALDWLCQSLLPPSAALAVLAAAGWIALSRLARPQRLPVATRAVLITGCDSGFGKETAKKLDAMGFTVLATVLEMNGPGALELRACCSPRLKLLQMDLTKPADISRALEFTKAHTTSTGLWGLVNNAGHNDVVADVELSPVATFRNCMEVNFFGALELTKGLLPLLHHSRGRIVTLGSPAGEMPYPCLAAYGTSKAAMALLMDAFSCELLPWGVKVSVIQPGCFKTESVSNVSHWEQRKQLLLANLPGELRQAYGEDYIEHLHREFLHSLRLALPDLSPVVDAITDALLAARPRPRYYPGRGLGLMYFIHYYLPEGLRRRFLQSFFIIPCLPRALRPGQPGATPAPDTAQDNPNPNPDPSLVGAR</sequence>
<protein>
    <recommendedName>
        <fullName>11-beta-hydroxysteroid dehydrogenase type 2</fullName>
        <shortName>11-DH2</shortName>
        <shortName>11-beta-HSD2</shortName>
        <shortName evidence="8">11beta-OHSD type 2</shortName>
        <ecNumber evidence="7">1.1.1.-</ecNumber>
    </recommendedName>
    <alternativeName>
        <fullName>Corticosteroid 11-beta-dehydrogenase isozyme 2</fullName>
    </alternativeName>
    <alternativeName>
        <fullName>NAD-dependent 11-beta-hydroxysteroid dehydrogenase</fullName>
    </alternativeName>
</protein>
<organism>
    <name type="scientific">Oryctolagus cuniculus</name>
    <name type="common">Rabbit</name>
    <dbReference type="NCBI Taxonomy" id="9986"/>
    <lineage>
        <taxon>Eukaryota</taxon>
        <taxon>Metazoa</taxon>
        <taxon>Chordata</taxon>
        <taxon>Craniata</taxon>
        <taxon>Vertebrata</taxon>
        <taxon>Euteleostomi</taxon>
        <taxon>Mammalia</taxon>
        <taxon>Eutheria</taxon>
        <taxon>Euarchontoglires</taxon>
        <taxon>Glires</taxon>
        <taxon>Lagomorpha</taxon>
        <taxon>Leporidae</taxon>
        <taxon>Oryctolagus</taxon>
    </lineage>
</organism>
<name>DHI2_RABIT</name>
<reference key="1">
    <citation type="journal article" date="1995" name="Endocrinology">
        <title>Expression cloning of the aldosterone target cell-specific 11 beta-hydroxysteroid dehydrogenase from rabbit collecting duct cells.</title>
        <authorList>
            <person name="Naray-Fejes-Toth A."/>
            <person name="Fejes-Toth G."/>
        </authorList>
    </citation>
    <scope>NUCLEOTIDE SEQUENCE [MRNA]</scope>
    <scope>FUNCTION</scope>
    <scope>CATALYTIC ACTIVITY</scope>
    <scope>BIOPHYSICOCHEMICAL PROPERTIES</scope>
    <scope>TISSUE SPECIFICITY</scope>
    <source>
        <strain>New Zealand white</strain>
        <tissue>Kidney cortex</tissue>
    </source>
</reference>
<evidence type="ECO:0000250" key="1"/>
<evidence type="ECO:0000250" key="2">
    <source>
        <dbReference type="UniProtKB" id="O77667"/>
    </source>
</evidence>
<evidence type="ECO:0000250" key="3">
    <source>
        <dbReference type="UniProtKB" id="P51661"/>
    </source>
</evidence>
<evidence type="ECO:0000250" key="4">
    <source>
        <dbReference type="UniProtKB" id="P80365"/>
    </source>
</evidence>
<evidence type="ECO:0000255" key="5">
    <source>
        <dbReference type="PROSITE-ProRule" id="PRU10001"/>
    </source>
</evidence>
<evidence type="ECO:0000256" key="6">
    <source>
        <dbReference type="SAM" id="MobiDB-lite"/>
    </source>
</evidence>
<evidence type="ECO:0000269" key="7">
    <source>
    </source>
</evidence>
<evidence type="ECO:0000303" key="8">
    <source>
    </source>
</evidence>
<evidence type="ECO:0000305" key="9"/>
<evidence type="ECO:0000305" key="10">
    <source>
    </source>
</evidence>
<keyword id="KW-0256">Endoplasmic reticulum</keyword>
<keyword id="KW-0443">Lipid metabolism</keyword>
<keyword id="KW-0492">Microsome</keyword>
<keyword id="KW-0520">NAD</keyword>
<keyword id="KW-0560">Oxidoreductase</keyword>
<keyword id="KW-1185">Reference proteome</keyword>
<keyword id="KW-0753">Steroid metabolism</keyword>
<gene>
    <name type="primary">HSD11B2</name>
</gene>
<feature type="chain" id="PRO_0000054629" description="11-beta-hydroxysteroid dehydrogenase type 2">
    <location>
        <begin position="1"/>
        <end position="406"/>
    </location>
</feature>
<feature type="region of interest" description="Disordered" evidence="6">
    <location>
        <begin position="379"/>
        <end position="406"/>
    </location>
</feature>
<feature type="active site" description="Proton acceptor" evidence="5">
    <location>
        <position position="232"/>
    </location>
</feature>
<feature type="binding site" evidence="1">
    <location>
        <begin position="82"/>
        <end position="111"/>
    </location>
    <ligand>
        <name>NAD(+)</name>
        <dbReference type="ChEBI" id="CHEBI:57540"/>
    </ligand>
</feature>
<feature type="binding site" evidence="1">
    <location>
        <position position="219"/>
    </location>
    <ligand>
        <name>substrate</name>
    </ligand>
</feature>
<comment type="function">
    <text evidence="2 3 4 7">Catalyzes the conversion of biologically active 11beta-hydroxyglucocorticoids (11beta-hydroxysteroid) such as corticosterone, to inactive 11-ketoglucocorticoids (11-oxosteroid) such as 11-dehydrocorticosterone, in the presence of NAD(+) (PubMed:7750480). Functions as a dehydrogenase (oxidase), thereby decreasing the concentration of active glucocorticoids, thus protecting the nonselective mineralocorticoid receptor from occupation by glucocorticoids (By similarity). Plays an important role in maintaining glucocorticoids balance during preimplantation and protects the fetus from excessive maternal corticosterone exposure (By similarity). Catalyzes the oxidation of 11beta-hydroxytestosterone (11beta,17beta-dihydroxyandrost-4-ene-3-one) to 11-ketotestosterone (17beta-hydroxyandrost-4-ene-3,11-dione), a major bioactive androgen. Catalyzes the conversion of 11beta-hydroxyandrostenedione (11beta-hydroxyandrost-4-ene-3,17-dione) to 11-ketoandrostenedione (androst-4-ene-3,11,17-trione), which can be further metabolized to 11-ketotestosterone. Converts 7-beta-25-dihydroxycholesterol to 7-oxo-25-hydroxycholesterol in vitro. 7-beta-25-dihydroxycholesterol (not 7-oxo-25-hydroxycholesterol) acts as a ligand for the G-protein-coupled receptor (GPCR) Epstein-Barr virus-induced gene 2 (EBI2) and may thereby regulate immune cell migration (By similarity). May protect ovulating oocytes and fertilizing spermatozoa from the adverse effects of cortisol (By similarity).</text>
</comment>
<comment type="catalytic activity">
    <reaction evidence="7">
        <text>an 11beta-hydroxysteroid + NAD(+) = an 11-oxosteroid + NADH + H(+)</text>
        <dbReference type="Rhea" id="RHEA:53116"/>
        <dbReference type="ChEBI" id="CHEBI:15378"/>
        <dbReference type="ChEBI" id="CHEBI:35346"/>
        <dbReference type="ChEBI" id="CHEBI:47787"/>
        <dbReference type="ChEBI" id="CHEBI:57540"/>
        <dbReference type="ChEBI" id="CHEBI:57945"/>
    </reaction>
    <physiologicalReaction direction="left-to-right" evidence="10">
        <dbReference type="Rhea" id="RHEA:53117"/>
    </physiologicalReaction>
</comment>
<comment type="catalytic activity">
    <reaction evidence="7">
        <text>corticosterone + NAD(+) = 11-dehydrocorticosterone + NADH + H(+)</text>
        <dbReference type="Rhea" id="RHEA:42204"/>
        <dbReference type="ChEBI" id="CHEBI:15378"/>
        <dbReference type="ChEBI" id="CHEBI:16827"/>
        <dbReference type="ChEBI" id="CHEBI:57540"/>
        <dbReference type="ChEBI" id="CHEBI:57945"/>
        <dbReference type="ChEBI" id="CHEBI:78600"/>
    </reaction>
    <physiologicalReaction direction="left-to-right" evidence="10">
        <dbReference type="Rhea" id="RHEA:42205"/>
    </physiologicalReaction>
</comment>
<comment type="catalytic activity">
    <reaction evidence="4">
        <text>cortisol + NAD(+) = cortisone + NADH + H(+)</text>
        <dbReference type="Rhea" id="RHEA:50208"/>
        <dbReference type="ChEBI" id="CHEBI:15378"/>
        <dbReference type="ChEBI" id="CHEBI:16962"/>
        <dbReference type="ChEBI" id="CHEBI:17650"/>
        <dbReference type="ChEBI" id="CHEBI:57540"/>
        <dbReference type="ChEBI" id="CHEBI:57945"/>
    </reaction>
    <physiologicalReaction direction="left-to-right" evidence="4">
        <dbReference type="Rhea" id="RHEA:50209"/>
    </physiologicalReaction>
</comment>
<comment type="catalytic activity">
    <reaction evidence="4">
        <text>11beta,17beta-dihydroxyandrost-4-ene-3-one + NAD(+) = 17beta-hydroxyandrost-4-ene-3,11-dione + NADH + H(+)</text>
        <dbReference type="Rhea" id="RHEA:69368"/>
        <dbReference type="ChEBI" id="CHEBI:15378"/>
        <dbReference type="ChEBI" id="CHEBI:34133"/>
        <dbReference type="ChEBI" id="CHEBI:57540"/>
        <dbReference type="ChEBI" id="CHEBI:57945"/>
        <dbReference type="ChEBI" id="CHEBI:81481"/>
    </reaction>
    <physiologicalReaction direction="left-to-right" evidence="4">
        <dbReference type="Rhea" id="RHEA:69369"/>
    </physiologicalReaction>
</comment>
<comment type="catalytic activity">
    <reaction evidence="4">
        <text>11beta-hydroxyandrost-4-ene-3,17-dione + NAD(+) = androst-4-ene-3,11,17-trione + NADH + H(+)</text>
        <dbReference type="Rhea" id="RHEA:69408"/>
        <dbReference type="ChEBI" id="CHEBI:2495"/>
        <dbReference type="ChEBI" id="CHEBI:15378"/>
        <dbReference type="ChEBI" id="CHEBI:27967"/>
        <dbReference type="ChEBI" id="CHEBI:57540"/>
        <dbReference type="ChEBI" id="CHEBI:57945"/>
    </reaction>
    <physiologicalReaction direction="left-to-right" evidence="4">
        <dbReference type="Rhea" id="RHEA:69409"/>
    </physiologicalReaction>
</comment>
<comment type="activity regulation">
    <text evidence="10">Inhibited by carbenoloxone.</text>
</comment>
<comment type="biophysicochemical properties">
    <kinetics>
        <KM evidence="7">6.6 nM for corticosterone</KM>
    </kinetics>
</comment>
<comment type="pathway">
    <text evidence="9">Steroid metabolism.</text>
</comment>
<comment type="subunit">
    <text evidence="4">Interacts with ligand-free cytoplasmic NR3C2.</text>
</comment>
<comment type="subcellular location">
    <subcellularLocation>
        <location evidence="4">Microsome</location>
    </subcellularLocation>
    <subcellularLocation>
        <location evidence="4">Endoplasmic reticulum</location>
    </subcellularLocation>
</comment>
<comment type="tissue specificity">
    <text evidence="7">Highly expressed in the kidney.</text>
</comment>
<comment type="similarity">
    <text evidence="9">Belongs to the short-chain dehydrogenases/reductases (SDR) family.</text>
</comment>
<accession>P51976</accession>